<name>ILVC_RUMCH</name>
<dbReference type="EC" id="1.1.1.86" evidence="1"/>
<dbReference type="EMBL" id="CP001348">
    <property type="protein sequence ID" value="ACL77723.1"/>
    <property type="molecule type" value="Genomic_DNA"/>
</dbReference>
<dbReference type="RefSeq" id="WP_015926775.1">
    <property type="nucleotide sequence ID" value="NC_011898.1"/>
</dbReference>
<dbReference type="SMR" id="B8I1T8"/>
<dbReference type="STRING" id="394503.Ccel_3435"/>
<dbReference type="KEGG" id="cce:Ccel_3435"/>
<dbReference type="eggNOG" id="COG0059">
    <property type="taxonomic scope" value="Bacteria"/>
</dbReference>
<dbReference type="HOGENOM" id="CLU_033821_0_1_9"/>
<dbReference type="OrthoDB" id="9804088at2"/>
<dbReference type="UniPathway" id="UPA00047">
    <property type="reaction ID" value="UER00056"/>
</dbReference>
<dbReference type="UniPathway" id="UPA00049">
    <property type="reaction ID" value="UER00060"/>
</dbReference>
<dbReference type="Proteomes" id="UP000001349">
    <property type="component" value="Chromosome"/>
</dbReference>
<dbReference type="GO" id="GO:0005829">
    <property type="term" value="C:cytosol"/>
    <property type="evidence" value="ECO:0007669"/>
    <property type="project" value="TreeGrafter"/>
</dbReference>
<dbReference type="GO" id="GO:0004455">
    <property type="term" value="F:ketol-acid reductoisomerase activity"/>
    <property type="evidence" value="ECO:0007669"/>
    <property type="project" value="UniProtKB-UniRule"/>
</dbReference>
<dbReference type="GO" id="GO:0000287">
    <property type="term" value="F:magnesium ion binding"/>
    <property type="evidence" value="ECO:0007669"/>
    <property type="project" value="UniProtKB-UniRule"/>
</dbReference>
<dbReference type="GO" id="GO:0050661">
    <property type="term" value="F:NADP binding"/>
    <property type="evidence" value="ECO:0007669"/>
    <property type="project" value="InterPro"/>
</dbReference>
<dbReference type="GO" id="GO:0009097">
    <property type="term" value="P:isoleucine biosynthetic process"/>
    <property type="evidence" value="ECO:0007669"/>
    <property type="project" value="UniProtKB-UniRule"/>
</dbReference>
<dbReference type="GO" id="GO:0009099">
    <property type="term" value="P:L-valine biosynthetic process"/>
    <property type="evidence" value="ECO:0007669"/>
    <property type="project" value="UniProtKB-UniRule"/>
</dbReference>
<dbReference type="FunFam" id="3.40.50.720:FF:000023">
    <property type="entry name" value="Ketol-acid reductoisomerase (NADP(+))"/>
    <property type="match status" value="1"/>
</dbReference>
<dbReference type="Gene3D" id="6.10.240.10">
    <property type="match status" value="1"/>
</dbReference>
<dbReference type="Gene3D" id="3.40.50.720">
    <property type="entry name" value="NAD(P)-binding Rossmann-like Domain"/>
    <property type="match status" value="1"/>
</dbReference>
<dbReference type="HAMAP" id="MF_00435">
    <property type="entry name" value="IlvC"/>
    <property type="match status" value="1"/>
</dbReference>
<dbReference type="InterPro" id="IPR008927">
    <property type="entry name" value="6-PGluconate_DH-like_C_sf"/>
</dbReference>
<dbReference type="InterPro" id="IPR013023">
    <property type="entry name" value="KARI"/>
</dbReference>
<dbReference type="InterPro" id="IPR000506">
    <property type="entry name" value="KARI_C"/>
</dbReference>
<dbReference type="InterPro" id="IPR013116">
    <property type="entry name" value="KARI_N"/>
</dbReference>
<dbReference type="InterPro" id="IPR014359">
    <property type="entry name" value="KARI_prok"/>
</dbReference>
<dbReference type="InterPro" id="IPR036291">
    <property type="entry name" value="NAD(P)-bd_dom_sf"/>
</dbReference>
<dbReference type="NCBIfam" id="TIGR00465">
    <property type="entry name" value="ilvC"/>
    <property type="match status" value="1"/>
</dbReference>
<dbReference type="NCBIfam" id="NF004017">
    <property type="entry name" value="PRK05479.1"/>
    <property type="match status" value="1"/>
</dbReference>
<dbReference type="NCBIfam" id="NF009940">
    <property type="entry name" value="PRK13403.1"/>
    <property type="match status" value="1"/>
</dbReference>
<dbReference type="PANTHER" id="PTHR21371">
    <property type="entry name" value="KETOL-ACID REDUCTOISOMERASE, MITOCHONDRIAL"/>
    <property type="match status" value="1"/>
</dbReference>
<dbReference type="PANTHER" id="PTHR21371:SF1">
    <property type="entry name" value="KETOL-ACID REDUCTOISOMERASE, MITOCHONDRIAL"/>
    <property type="match status" value="1"/>
</dbReference>
<dbReference type="Pfam" id="PF01450">
    <property type="entry name" value="KARI_C"/>
    <property type="match status" value="1"/>
</dbReference>
<dbReference type="Pfam" id="PF07991">
    <property type="entry name" value="KARI_N"/>
    <property type="match status" value="1"/>
</dbReference>
<dbReference type="PIRSF" id="PIRSF000116">
    <property type="entry name" value="IlvC_gammaproteo"/>
    <property type="match status" value="1"/>
</dbReference>
<dbReference type="SUPFAM" id="SSF48179">
    <property type="entry name" value="6-phosphogluconate dehydrogenase C-terminal domain-like"/>
    <property type="match status" value="1"/>
</dbReference>
<dbReference type="SUPFAM" id="SSF51735">
    <property type="entry name" value="NAD(P)-binding Rossmann-fold domains"/>
    <property type="match status" value="1"/>
</dbReference>
<dbReference type="PROSITE" id="PS51851">
    <property type="entry name" value="KARI_C"/>
    <property type="match status" value="1"/>
</dbReference>
<dbReference type="PROSITE" id="PS51850">
    <property type="entry name" value="KARI_N"/>
    <property type="match status" value="1"/>
</dbReference>
<reference key="1">
    <citation type="submission" date="2009-01" db="EMBL/GenBank/DDBJ databases">
        <title>Complete sequence of Clostridium cellulolyticum H10.</title>
        <authorList>
            <consortium name="US DOE Joint Genome Institute"/>
            <person name="Lucas S."/>
            <person name="Copeland A."/>
            <person name="Lapidus A."/>
            <person name="Glavina del Rio T."/>
            <person name="Dalin E."/>
            <person name="Tice H."/>
            <person name="Bruce D."/>
            <person name="Goodwin L."/>
            <person name="Pitluck S."/>
            <person name="Chertkov O."/>
            <person name="Saunders E."/>
            <person name="Brettin T."/>
            <person name="Detter J.C."/>
            <person name="Han C."/>
            <person name="Larimer F."/>
            <person name="Land M."/>
            <person name="Hauser L."/>
            <person name="Kyrpides N."/>
            <person name="Ivanova N."/>
            <person name="Zhou J."/>
            <person name="Richardson P."/>
        </authorList>
    </citation>
    <scope>NUCLEOTIDE SEQUENCE [LARGE SCALE GENOMIC DNA]</scope>
    <source>
        <strain>ATCC 35319 / DSM 5812 / JCM 6584 / H10</strain>
    </source>
</reference>
<feature type="chain" id="PRO_1000190935" description="Ketol-acid reductoisomerase (NADP(+))">
    <location>
        <begin position="1"/>
        <end position="331"/>
    </location>
</feature>
<feature type="domain" description="KARI N-terminal Rossmann" evidence="2">
    <location>
        <begin position="2"/>
        <end position="182"/>
    </location>
</feature>
<feature type="domain" description="KARI C-terminal knotted" evidence="3">
    <location>
        <begin position="183"/>
        <end position="329"/>
    </location>
</feature>
<feature type="active site" evidence="1">
    <location>
        <position position="108"/>
    </location>
</feature>
<feature type="binding site" evidence="1">
    <location>
        <begin position="25"/>
        <end position="28"/>
    </location>
    <ligand>
        <name>NADP(+)</name>
        <dbReference type="ChEBI" id="CHEBI:58349"/>
    </ligand>
</feature>
<feature type="binding site" evidence="1">
    <location>
        <position position="51"/>
    </location>
    <ligand>
        <name>NADP(+)</name>
        <dbReference type="ChEBI" id="CHEBI:58349"/>
    </ligand>
</feature>
<feature type="binding site" evidence="1">
    <location>
        <begin position="83"/>
        <end position="86"/>
    </location>
    <ligand>
        <name>NADP(+)</name>
        <dbReference type="ChEBI" id="CHEBI:58349"/>
    </ligand>
</feature>
<feature type="binding site" evidence="1">
    <location>
        <position position="134"/>
    </location>
    <ligand>
        <name>NADP(+)</name>
        <dbReference type="ChEBI" id="CHEBI:58349"/>
    </ligand>
</feature>
<feature type="binding site" evidence="1">
    <location>
        <position position="191"/>
    </location>
    <ligand>
        <name>Mg(2+)</name>
        <dbReference type="ChEBI" id="CHEBI:18420"/>
        <label>1</label>
    </ligand>
</feature>
<feature type="binding site" evidence="1">
    <location>
        <position position="191"/>
    </location>
    <ligand>
        <name>Mg(2+)</name>
        <dbReference type="ChEBI" id="CHEBI:18420"/>
        <label>2</label>
    </ligand>
</feature>
<feature type="binding site" evidence="1">
    <location>
        <position position="195"/>
    </location>
    <ligand>
        <name>Mg(2+)</name>
        <dbReference type="ChEBI" id="CHEBI:18420"/>
        <label>1</label>
    </ligand>
</feature>
<feature type="binding site" evidence="1">
    <location>
        <position position="227"/>
    </location>
    <ligand>
        <name>Mg(2+)</name>
        <dbReference type="ChEBI" id="CHEBI:18420"/>
        <label>2</label>
    </ligand>
</feature>
<feature type="binding site" evidence="1">
    <location>
        <position position="231"/>
    </location>
    <ligand>
        <name>Mg(2+)</name>
        <dbReference type="ChEBI" id="CHEBI:18420"/>
        <label>2</label>
    </ligand>
</feature>
<feature type="binding site" evidence="1">
    <location>
        <position position="252"/>
    </location>
    <ligand>
        <name>substrate</name>
    </ligand>
</feature>
<accession>B8I1T8</accession>
<proteinExistence type="inferred from homology"/>
<gene>
    <name evidence="1" type="primary">ilvC</name>
    <name type="ordered locus">Ccel_3435</name>
</gene>
<organism>
    <name type="scientific">Ruminiclostridium cellulolyticum (strain ATCC 35319 / DSM 5812 / JCM 6584 / H10)</name>
    <name type="common">Clostridium cellulolyticum</name>
    <dbReference type="NCBI Taxonomy" id="394503"/>
    <lineage>
        <taxon>Bacteria</taxon>
        <taxon>Bacillati</taxon>
        <taxon>Bacillota</taxon>
        <taxon>Clostridia</taxon>
        <taxon>Eubacteriales</taxon>
        <taxon>Oscillospiraceae</taxon>
        <taxon>Ruminiclostridium</taxon>
    </lineage>
</organism>
<keyword id="KW-0028">Amino-acid biosynthesis</keyword>
<keyword id="KW-0100">Branched-chain amino acid biosynthesis</keyword>
<keyword id="KW-0460">Magnesium</keyword>
<keyword id="KW-0479">Metal-binding</keyword>
<keyword id="KW-0521">NADP</keyword>
<keyword id="KW-0560">Oxidoreductase</keyword>
<keyword id="KW-1185">Reference proteome</keyword>
<sequence length="331" mass="36278">MAKMYYDSDCNLKLLEGKTVAVIGYGSQGHAHAQNLKDSGVNVIVGLTPSSARRKQVEADGLKAYDTAEAAKMADIIMILVPDEKQAAMYEESIAQNLEAGNILMFAHGFNINFKQIVPPADVDVIMVAPKGPGHTVRSQYKEGRGVPALIAVEKDASGKAKEYALAYASGIGAGRAGILETTFREETETDLFGEQAVLCGGVTELMKAGFETLVAAGYQPEIAYFECIHEMKLIVDLINQGGFGEMRYSISDTAEYGDYVTGKRIITDETRKEMKKVLKEIQDGKFAANWIIENKAAGRANFISMRRNESEHQLETVGAELRKMMSWLKK</sequence>
<evidence type="ECO:0000255" key="1">
    <source>
        <dbReference type="HAMAP-Rule" id="MF_00435"/>
    </source>
</evidence>
<evidence type="ECO:0000255" key="2">
    <source>
        <dbReference type="PROSITE-ProRule" id="PRU01197"/>
    </source>
</evidence>
<evidence type="ECO:0000255" key="3">
    <source>
        <dbReference type="PROSITE-ProRule" id="PRU01198"/>
    </source>
</evidence>
<protein>
    <recommendedName>
        <fullName evidence="1">Ketol-acid reductoisomerase (NADP(+))</fullName>
        <shortName evidence="1">KARI</shortName>
        <ecNumber evidence="1">1.1.1.86</ecNumber>
    </recommendedName>
    <alternativeName>
        <fullName evidence="1">Acetohydroxy-acid isomeroreductase</fullName>
        <shortName evidence="1">AHIR</shortName>
    </alternativeName>
    <alternativeName>
        <fullName evidence="1">Alpha-keto-beta-hydroxylacyl reductoisomerase</fullName>
    </alternativeName>
    <alternativeName>
        <fullName evidence="1">Ketol-acid reductoisomerase type 1</fullName>
    </alternativeName>
    <alternativeName>
        <fullName evidence="1">Ketol-acid reductoisomerase type I</fullName>
    </alternativeName>
</protein>
<comment type="function">
    <text evidence="1">Involved in the biosynthesis of branched-chain amino acids (BCAA). Catalyzes an alkyl-migration followed by a ketol-acid reduction of (S)-2-acetolactate (S2AL) to yield (R)-2,3-dihydroxy-isovalerate. In the isomerase reaction, S2AL is rearranged via a Mg-dependent methyl migration to produce 3-hydroxy-3-methyl-2-ketobutyrate (HMKB). In the reductase reaction, this 2-ketoacid undergoes a metal-dependent reduction by NADPH to yield (R)-2,3-dihydroxy-isovalerate.</text>
</comment>
<comment type="catalytic activity">
    <reaction evidence="1">
        <text>(2R)-2,3-dihydroxy-3-methylbutanoate + NADP(+) = (2S)-2-acetolactate + NADPH + H(+)</text>
        <dbReference type="Rhea" id="RHEA:22068"/>
        <dbReference type="ChEBI" id="CHEBI:15378"/>
        <dbReference type="ChEBI" id="CHEBI:49072"/>
        <dbReference type="ChEBI" id="CHEBI:57783"/>
        <dbReference type="ChEBI" id="CHEBI:58349"/>
        <dbReference type="ChEBI" id="CHEBI:58476"/>
        <dbReference type="EC" id="1.1.1.86"/>
    </reaction>
</comment>
<comment type="catalytic activity">
    <reaction evidence="1">
        <text>(2R,3R)-2,3-dihydroxy-3-methylpentanoate + NADP(+) = (S)-2-ethyl-2-hydroxy-3-oxobutanoate + NADPH + H(+)</text>
        <dbReference type="Rhea" id="RHEA:13493"/>
        <dbReference type="ChEBI" id="CHEBI:15378"/>
        <dbReference type="ChEBI" id="CHEBI:49256"/>
        <dbReference type="ChEBI" id="CHEBI:49258"/>
        <dbReference type="ChEBI" id="CHEBI:57783"/>
        <dbReference type="ChEBI" id="CHEBI:58349"/>
        <dbReference type="EC" id="1.1.1.86"/>
    </reaction>
</comment>
<comment type="cofactor">
    <cofactor evidence="1">
        <name>Mg(2+)</name>
        <dbReference type="ChEBI" id="CHEBI:18420"/>
    </cofactor>
    <text evidence="1">Binds 2 magnesium ions per subunit.</text>
</comment>
<comment type="pathway">
    <text evidence="1">Amino-acid biosynthesis; L-isoleucine biosynthesis; L-isoleucine from 2-oxobutanoate: step 2/4.</text>
</comment>
<comment type="pathway">
    <text evidence="1">Amino-acid biosynthesis; L-valine biosynthesis; L-valine from pyruvate: step 2/4.</text>
</comment>
<comment type="similarity">
    <text evidence="1">Belongs to the ketol-acid reductoisomerase family.</text>
</comment>